<reference evidence="6" key="1">
    <citation type="journal article" date="2000" name="Science">
        <title>The genome sequence of Drosophila melanogaster.</title>
        <authorList>
            <person name="Adams M.D."/>
            <person name="Celniker S.E."/>
            <person name="Holt R.A."/>
            <person name="Evans C.A."/>
            <person name="Gocayne J.D."/>
            <person name="Amanatides P.G."/>
            <person name="Scherer S.E."/>
            <person name="Li P.W."/>
            <person name="Hoskins R.A."/>
            <person name="Galle R.F."/>
            <person name="George R.A."/>
            <person name="Lewis S.E."/>
            <person name="Richards S."/>
            <person name="Ashburner M."/>
            <person name="Henderson S.N."/>
            <person name="Sutton G.G."/>
            <person name="Wortman J.R."/>
            <person name="Yandell M.D."/>
            <person name="Zhang Q."/>
            <person name="Chen L.X."/>
            <person name="Brandon R.C."/>
            <person name="Rogers Y.-H.C."/>
            <person name="Blazej R.G."/>
            <person name="Champe M."/>
            <person name="Pfeiffer B.D."/>
            <person name="Wan K.H."/>
            <person name="Doyle C."/>
            <person name="Baxter E.G."/>
            <person name="Helt G."/>
            <person name="Nelson C.R."/>
            <person name="Miklos G.L.G."/>
            <person name="Abril J.F."/>
            <person name="Agbayani A."/>
            <person name="An H.-J."/>
            <person name="Andrews-Pfannkoch C."/>
            <person name="Baldwin D."/>
            <person name="Ballew R.M."/>
            <person name="Basu A."/>
            <person name="Baxendale J."/>
            <person name="Bayraktaroglu L."/>
            <person name="Beasley E.M."/>
            <person name="Beeson K.Y."/>
            <person name="Benos P.V."/>
            <person name="Berman B.P."/>
            <person name="Bhandari D."/>
            <person name="Bolshakov S."/>
            <person name="Borkova D."/>
            <person name="Botchan M.R."/>
            <person name="Bouck J."/>
            <person name="Brokstein P."/>
            <person name="Brottier P."/>
            <person name="Burtis K.C."/>
            <person name="Busam D.A."/>
            <person name="Butler H."/>
            <person name="Cadieu E."/>
            <person name="Center A."/>
            <person name="Chandra I."/>
            <person name="Cherry J.M."/>
            <person name="Cawley S."/>
            <person name="Dahlke C."/>
            <person name="Davenport L.B."/>
            <person name="Davies P."/>
            <person name="de Pablos B."/>
            <person name="Delcher A."/>
            <person name="Deng Z."/>
            <person name="Mays A.D."/>
            <person name="Dew I."/>
            <person name="Dietz S.M."/>
            <person name="Dodson K."/>
            <person name="Doup L.E."/>
            <person name="Downes M."/>
            <person name="Dugan-Rocha S."/>
            <person name="Dunkov B.C."/>
            <person name="Dunn P."/>
            <person name="Durbin K.J."/>
            <person name="Evangelista C.C."/>
            <person name="Ferraz C."/>
            <person name="Ferriera S."/>
            <person name="Fleischmann W."/>
            <person name="Fosler C."/>
            <person name="Gabrielian A.E."/>
            <person name="Garg N.S."/>
            <person name="Gelbart W.M."/>
            <person name="Glasser K."/>
            <person name="Glodek A."/>
            <person name="Gong F."/>
            <person name="Gorrell J.H."/>
            <person name="Gu Z."/>
            <person name="Guan P."/>
            <person name="Harris M."/>
            <person name="Harris N.L."/>
            <person name="Harvey D.A."/>
            <person name="Heiman T.J."/>
            <person name="Hernandez J.R."/>
            <person name="Houck J."/>
            <person name="Hostin D."/>
            <person name="Houston K.A."/>
            <person name="Howland T.J."/>
            <person name="Wei M.-H."/>
            <person name="Ibegwam C."/>
            <person name="Jalali M."/>
            <person name="Kalush F."/>
            <person name="Karpen G.H."/>
            <person name="Ke Z."/>
            <person name="Kennison J.A."/>
            <person name="Ketchum K.A."/>
            <person name="Kimmel B.E."/>
            <person name="Kodira C.D."/>
            <person name="Kraft C.L."/>
            <person name="Kravitz S."/>
            <person name="Kulp D."/>
            <person name="Lai Z."/>
            <person name="Lasko P."/>
            <person name="Lei Y."/>
            <person name="Levitsky A.A."/>
            <person name="Li J.H."/>
            <person name="Li Z."/>
            <person name="Liang Y."/>
            <person name="Lin X."/>
            <person name="Liu X."/>
            <person name="Mattei B."/>
            <person name="McIntosh T.C."/>
            <person name="McLeod M.P."/>
            <person name="McPherson D."/>
            <person name="Merkulov G."/>
            <person name="Milshina N.V."/>
            <person name="Mobarry C."/>
            <person name="Morris J."/>
            <person name="Moshrefi A."/>
            <person name="Mount S.M."/>
            <person name="Moy M."/>
            <person name="Murphy B."/>
            <person name="Murphy L."/>
            <person name="Muzny D.M."/>
            <person name="Nelson D.L."/>
            <person name="Nelson D.R."/>
            <person name="Nelson K.A."/>
            <person name="Nixon K."/>
            <person name="Nusskern D.R."/>
            <person name="Pacleb J.M."/>
            <person name="Palazzolo M."/>
            <person name="Pittman G.S."/>
            <person name="Pan S."/>
            <person name="Pollard J."/>
            <person name="Puri V."/>
            <person name="Reese M.G."/>
            <person name="Reinert K."/>
            <person name="Remington K."/>
            <person name="Saunders R.D.C."/>
            <person name="Scheeler F."/>
            <person name="Shen H."/>
            <person name="Shue B.C."/>
            <person name="Siden-Kiamos I."/>
            <person name="Simpson M."/>
            <person name="Skupski M.P."/>
            <person name="Smith T.J."/>
            <person name="Spier E."/>
            <person name="Spradling A.C."/>
            <person name="Stapleton M."/>
            <person name="Strong R."/>
            <person name="Sun E."/>
            <person name="Svirskas R."/>
            <person name="Tector C."/>
            <person name="Turner R."/>
            <person name="Venter E."/>
            <person name="Wang A.H."/>
            <person name="Wang X."/>
            <person name="Wang Z.-Y."/>
            <person name="Wassarman D.A."/>
            <person name="Weinstock G.M."/>
            <person name="Weissenbach J."/>
            <person name="Williams S.M."/>
            <person name="Woodage T."/>
            <person name="Worley K.C."/>
            <person name="Wu D."/>
            <person name="Yang S."/>
            <person name="Yao Q.A."/>
            <person name="Ye J."/>
            <person name="Yeh R.-F."/>
            <person name="Zaveri J.S."/>
            <person name="Zhan M."/>
            <person name="Zhang G."/>
            <person name="Zhao Q."/>
            <person name="Zheng L."/>
            <person name="Zheng X.H."/>
            <person name="Zhong F.N."/>
            <person name="Zhong W."/>
            <person name="Zhou X."/>
            <person name="Zhu S.C."/>
            <person name="Zhu X."/>
            <person name="Smith H.O."/>
            <person name="Gibbs R.A."/>
            <person name="Myers E.W."/>
            <person name="Rubin G.M."/>
            <person name="Venter J.C."/>
        </authorList>
    </citation>
    <scope>NUCLEOTIDE SEQUENCE [LARGE SCALE GENOMIC DNA]</scope>
    <source>
        <strain evidence="6">Berkeley</strain>
    </source>
</reference>
<reference evidence="6" key="2">
    <citation type="journal article" date="2002" name="Genome Biol.">
        <title>Annotation of the Drosophila melanogaster euchromatic genome: a systematic review.</title>
        <authorList>
            <person name="Misra S."/>
            <person name="Crosby M.A."/>
            <person name="Mungall C.J."/>
            <person name="Matthews B.B."/>
            <person name="Campbell K.S."/>
            <person name="Hradecky P."/>
            <person name="Huang Y."/>
            <person name="Kaminker J.S."/>
            <person name="Millburn G.H."/>
            <person name="Prochnik S.E."/>
            <person name="Smith C.D."/>
            <person name="Tupy J.L."/>
            <person name="Whitfield E.J."/>
            <person name="Bayraktaroglu L."/>
            <person name="Berman B.P."/>
            <person name="Bettencourt B.R."/>
            <person name="Celniker S.E."/>
            <person name="de Grey A.D.N.J."/>
            <person name="Drysdale R.A."/>
            <person name="Harris N.L."/>
            <person name="Richter J."/>
            <person name="Russo S."/>
            <person name="Schroeder A.J."/>
            <person name="Shu S.Q."/>
            <person name="Stapleton M."/>
            <person name="Yamada C."/>
            <person name="Ashburner M."/>
            <person name="Gelbart W.M."/>
            <person name="Rubin G.M."/>
            <person name="Lewis S.E."/>
        </authorList>
    </citation>
    <scope>GENOME REANNOTATION</scope>
    <source>
        <strain evidence="6">Berkeley</strain>
    </source>
</reference>
<reference evidence="4" key="3">
    <citation type="journal article" date="2002" name="Genome Biol.">
        <title>A Drosophila full-length cDNA resource.</title>
        <authorList>
            <person name="Stapleton M."/>
            <person name="Carlson J.W."/>
            <person name="Brokstein P."/>
            <person name="Yu C."/>
            <person name="Champe M."/>
            <person name="George R.A."/>
            <person name="Guarin H."/>
            <person name="Kronmiller B."/>
            <person name="Pacleb J.M."/>
            <person name="Park S."/>
            <person name="Wan K.H."/>
            <person name="Rubin G.M."/>
            <person name="Celniker S.E."/>
        </authorList>
    </citation>
    <scope>NUCLEOTIDE SEQUENCE [LARGE SCALE MRNA]</scope>
    <source>
        <strain evidence="4">Berkeley</strain>
        <tissue evidence="4">Embryo</tissue>
    </source>
</reference>
<reference evidence="2" key="4">
    <citation type="journal article" date="2010" name="J. Biol. Chem.">
        <title>New aminoacyl-tRNA synthetase-like protein in insecta with an essential mitochondrial function.</title>
        <authorList>
            <person name="Guitart T."/>
            <person name="Leon Bernardo T."/>
            <person name="Sagales J."/>
            <person name="Stratmann T."/>
            <person name="Bernues J."/>
            <person name="Ribas de Pouplana L."/>
        </authorList>
    </citation>
    <scope>FUNCTION</scope>
    <scope>SUBCELLULAR LOCATION</scope>
    <scope>DEVELOPMENTAL STAGE</scope>
</reference>
<name>SLIMP_DROME</name>
<accession>Q95T19</accession>
<evidence type="ECO:0000269" key="1">
    <source>
    </source>
</evidence>
<evidence type="ECO:0000305" key="2"/>
<evidence type="ECO:0000305" key="3">
    <source>
    </source>
</evidence>
<evidence type="ECO:0000312" key="4">
    <source>
        <dbReference type="EMBL" id="AAL25413.1"/>
    </source>
</evidence>
<evidence type="ECO:0000312" key="5">
    <source>
        <dbReference type="FlyBase" id="FBgn0051133"/>
    </source>
</evidence>
<evidence type="ECO:0000312" key="6">
    <source>
        <dbReference type="Proteomes" id="UP000000803"/>
    </source>
</evidence>
<sequence>MLSLRSVLKHCLSAKKTCSRNISALYITGDKANENYVTLQPYMDFNKTFGERQFLEQSISSRGLDIRLETVLSKYEKYKTHHAQLSKVAEERERVTKRLKELTKSGSSAVQLEELKEHGKSLRNELKALKQTLYPIEDDFIHDYLHLPNLLHVQCPVGGEEKLLYRHGIPKSENKTTSHLARQELVHFVDNNRYYLMEQAALFDVNAMQSLARYFVNHGHFIQTANPDFVRCVLLEANATPLSDYHLVQEEHLQNKINTAYLTGGASFESYLGAMTKLCVYPSVLPLRYVCCGRSYNRAEADLYGPIPSLYTATQTNAVQIFVATQTDNEADSQLEHILNLATDFYKALDIPFRISYATAADLTPAESIRAVIEVYAPSLQRYVCVGRISNYGDFVSKRILFSTRREKHYDFLHMVGGPVLYTSRLIAALVEHGVRLEDCKLLGSISQKPVHQQDLQQFKDLFT</sequence>
<gene>
    <name evidence="5" type="primary">Slimp</name>
    <name evidence="5" type="ORF">CG31133</name>
</gene>
<dbReference type="EMBL" id="AE014297">
    <property type="protein sequence ID" value="AAN13983.1"/>
    <property type="molecule type" value="Genomic_DNA"/>
</dbReference>
<dbReference type="EMBL" id="AY060374">
    <property type="protein sequence ID" value="AAL25413.1"/>
    <property type="molecule type" value="mRNA"/>
</dbReference>
<dbReference type="RefSeq" id="NP_732958.1">
    <property type="nucleotide sequence ID" value="NM_170125.3"/>
</dbReference>
<dbReference type="SMR" id="Q95T19"/>
<dbReference type="FunCoup" id="Q95T19">
    <property type="interactions" value="48"/>
</dbReference>
<dbReference type="IntAct" id="Q95T19">
    <property type="interactions" value="6"/>
</dbReference>
<dbReference type="STRING" id="7227.FBpp0083968"/>
<dbReference type="PaxDb" id="7227-FBpp0083968"/>
<dbReference type="DNASU" id="318604"/>
<dbReference type="EnsemblMetazoa" id="FBtr0084583">
    <property type="protein sequence ID" value="FBpp0083968"/>
    <property type="gene ID" value="FBgn0051133"/>
</dbReference>
<dbReference type="GeneID" id="318604"/>
<dbReference type="KEGG" id="dme:Dmel_CG31133"/>
<dbReference type="UCSC" id="CG31133-RA">
    <property type="organism name" value="d. melanogaster"/>
</dbReference>
<dbReference type="AGR" id="FB:FBgn0051133"/>
<dbReference type="CTD" id="318604"/>
<dbReference type="FlyBase" id="FBgn0051133">
    <property type="gene designation" value="Slimp"/>
</dbReference>
<dbReference type="VEuPathDB" id="VectorBase:FBgn0051133"/>
<dbReference type="eggNOG" id="KOG2509">
    <property type="taxonomic scope" value="Eukaryota"/>
</dbReference>
<dbReference type="GeneTree" id="ENSGT00940000153792"/>
<dbReference type="HOGENOM" id="CLU_031998_0_0_1"/>
<dbReference type="InParanoid" id="Q95T19"/>
<dbReference type="OMA" id="YQTHHEQ"/>
<dbReference type="OrthoDB" id="24683at2759"/>
<dbReference type="PhylomeDB" id="Q95T19"/>
<dbReference type="BioGRID-ORCS" id="318604">
    <property type="hits" value="0 hits in 3 CRISPR screens"/>
</dbReference>
<dbReference type="GenomeRNAi" id="318604"/>
<dbReference type="PRO" id="PR:Q95T19"/>
<dbReference type="Proteomes" id="UP000000803">
    <property type="component" value="Chromosome 3R"/>
</dbReference>
<dbReference type="Bgee" id="FBgn0051133">
    <property type="expression patterns" value="Expressed in anterior ectoderm anlage (Drosophila) and 40 other cell types or tissues"/>
</dbReference>
<dbReference type="GO" id="GO:0005829">
    <property type="term" value="C:cytosol"/>
    <property type="evidence" value="ECO:0000318"/>
    <property type="project" value="GO_Central"/>
</dbReference>
<dbReference type="GO" id="GO:0005739">
    <property type="term" value="C:mitochondrion"/>
    <property type="evidence" value="ECO:0000314"/>
    <property type="project" value="FlyBase"/>
</dbReference>
<dbReference type="GO" id="GO:0140715">
    <property type="term" value="C:serine-tRNA ligase complex"/>
    <property type="evidence" value="ECO:0000353"/>
    <property type="project" value="FlyBase"/>
</dbReference>
<dbReference type="GO" id="GO:0000166">
    <property type="term" value="F:nucleotide binding"/>
    <property type="evidence" value="ECO:0007669"/>
    <property type="project" value="InterPro"/>
</dbReference>
<dbReference type="GO" id="GO:0004828">
    <property type="term" value="F:serine-tRNA ligase activity"/>
    <property type="evidence" value="ECO:0007669"/>
    <property type="project" value="InterPro"/>
</dbReference>
<dbReference type="GO" id="GO:0000049">
    <property type="term" value="F:tRNA binding"/>
    <property type="evidence" value="ECO:0000314"/>
    <property type="project" value="FlyBase"/>
</dbReference>
<dbReference type="GO" id="GO:0070158">
    <property type="term" value="P:mitochondrial seryl-tRNA aminoacylation"/>
    <property type="evidence" value="ECO:0000314"/>
    <property type="project" value="FlyBase"/>
</dbReference>
<dbReference type="GO" id="GO:0032543">
    <property type="term" value="P:mitochondrial translation"/>
    <property type="evidence" value="ECO:0000314"/>
    <property type="project" value="FlyBase"/>
</dbReference>
<dbReference type="FunFam" id="3.30.930.10:FF:000157">
    <property type="entry name" value="Seryl-tRNA synthetase, putative"/>
    <property type="match status" value="1"/>
</dbReference>
<dbReference type="Gene3D" id="3.30.930.10">
    <property type="entry name" value="Bira Bifunctional Protein, Domain 2"/>
    <property type="match status" value="1"/>
</dbReference>
<dbReference type="Gene3D" id="1.10.287.40">
    <property type="entry name" value="Serine-tRNA synthetase, tRNA binding domain"/>
    <property type="match status" value="1"/>
</dbReference>
<dbReference type="InterPro" id="IPR002314">
    <property type="entry name" value="aa-tRNA-synt_IIb"/>
</dbReference>
<dbReference type="InterPro" id="IPR045864">
    <property type="entry name" value="aa-tRNA-synth_II/BPL/LPL"/>
</dbReference>
<dbReference type="InterPro" id="IPR002317">
    <property type="entry name" value="Ser-tRNA-ligase_type_1"/>
</dbReference>
<dbReference type="InterPro" id="IPR015866">
    <property type="entry name" value="Ser-tRNA-synth_1_N"/>
</dbReference>
<dbReference type="InterPro" id="IPR042103">
    <property type="entry name" value="SerRS_1_N_sf"/>
</dbReference>
<dbReference type="InterPro" id="IPR010978">
    <property type="entry name" value="tRNA-bd_arm"/>
</dbReference>
<dbReference type="PANTHER" id="PTHR11778">
    <property type="entry name" value="SERYL-TRNA SYNTHETASE"/>
    <property type="match status" value="1"/>
</dbReference>
<dbReference type="Pfam" id="PF02403">
    <property type="entry name" value="Seryl_tRNA_N"/>
    <property type="match status" value="1"/>
</dbReference>
<dbReference type="Pfam" id="PF00587">
    <property type="entry name" value="tRNA-synt_2b"/>
    <property type="match status" value="1"/>
</dbReference>
<dbReference type="PIRSF" id="PIRSF001529">
    <property type="entry name" value="Ser-tRNA-synth_IIa"/>
    <property type="match status" value="1"/>
</dbReference>
<dbReference type="SUPFAM" id="SSF55681">
    <property type="entry name" value="Class II aaRS and biotin synthetases"/>
    <property type="match status" value="1"/>
</dbReference>
<dbReference type="SUPFAM" id="SSF46589">
    <property type="entry name" value="tRNA-binding arm"/>
    <property type="match status" value="1"/>
</dbReference>
<feature type="transit peptide" description="Mitochondrion" evidence="3">
    <location>
        <begin position="1"/>
        <end status="unknown"/>
    </location>
</feature>
<feature type="chain" id="PRO_0000436150" description="Serine--tRNA synthetase-like protein Slimp" evidence="2">
    <location>
        <begin status="unknown"/>
        <end position="464"/>
    </location>
</feature>
<organism evidence="4">
    <name type="scientific">Drosophila melanogaster</name>
    <name type="common">Fruit fly</name>
    <dbReference type="NCBI Taxonomy" id="7227"/>
    <lineage>
        <taxon>Eukaryota</taxon>
        <taxon>Metazoa</taxon>
        <taxon>Ecdysozoa</taxon>
        <taxon>Arthropoda</taxon>
        <taxon>Hexapoda</taxon>
        <taxon>Insecta</taxon>
        <taxon>Pterygota</taxon>
        <taxon>Neoptera</taxon>
        <taxon>Endopterygota</taxon>
        <taxon>Diptera</taxon>
        <taxon>Brachycera</taxon>
        <taxon>Muscomorpha</taxon>
        <taxon>Ephydroidea</taxon>
        <taxon>Drosophilidae</taxon>
        <taxon>Drosophila</taxon>
        <taxon>Sophophora</taxon>
    </lineage>
</organism>
<protein>
    <recommendedName>
        <fullName evidence="2">Serine--tRNA synthetase-like protein Slimp</fullName>
    </recommendedName>
    <alternativeName>
        <fullName evidence="5">Seryl-tRNA synthetase-like insect mitochondrial protein</fullName>
    </alternativeName>
</protein>
<comment type="function">
    <text evidence="1">Essential protein which may play a role in mitochondrial morphogenesis and function. Has transfer RNA (tRNA)-binding activity and can bind tRNA(Ser) but does not have serine--tRNA ligase activity and does not bind ATP.</text>
</comment>
<comment type="subcellular location">
    <subcellularLocation>
        <location evidence="1">Mitochondrion</location>
    </subcellularLocation>
</comment>
<comment type="developmental stage">
    <text evidence="1">Expressed from late embryogenesis with expression continuing in larva, pupa and adult (at protein level).</text>
</comment>
<comment type="similarity">
    <text evidence="2">Belongs to the class-II aminoacyl-tRNA synthetase family. Type-1 seryl-tRNA synthetase subfamily.</text>
</comment>
<keyword id="KW-0496">Mitochondrion</keyword>
<keyword id="KW-1185">Reference proteome</keyword>
<keyword id="KW-0694">RNA-binding</keyword>
<keyword id="KW-0809">Transit peptide</keyword>
<proteinExistence type="evidence at protein level"/>